<reference key="1">
    <citation type="submission" date="2008-06" db="EMBL/GenBank/DDBJ databases">
        <title>Complete sequence of Chlorobium phaeobacteroides BS1.</title>
        <authorList>
            <consortium name="US DOE Joint Genome Institute"/>
            <person name="Lucas S."/>
            <person name="Copeland A."/>
            <person name="Lapidus A."/>
            <person name="Glavina del Rio T."/>
            <person name="Dalin E."/>
            <person name="Tice H."/>
            <person name="Bruce D."/>
            <person name="Goodwin L."/>
            <person name="Pitluck S."/>
            <person name="Schmutz J."/>
            <person name="Larimer F."/>
            <person name="Land M."/>
            <person name="Hauser L."/>
            <person name="Kyrpides N."/>
            <person name="Ovchinnikova G."/>
            <person name="Li T."/>
            <person name="Liu Z."/>
            <person name="Zhao F."/>
            <person name="Overmann J."/>
            <person name="Bryant D.A."/>
            <person name="Richardson P."/>
        </authorList>
    </citation>
    <scope>NUCLEOTIDE SEQUENCE [LARGE SCALE GENOMIC DNA]</scope>
    <source>
        <strain>BS1</strain>
    </source>
</reference>
<proteinExistence type="inferred from homology"/>
<feature type="chain" id="PRO_1000098390" description="Methionyl-tRNA formyltransferase">
    <location>
        <begin position="1"/>
        <end position="317"/>
    </location>
</feature>
<feature type="binding site" evidence="1">
    <location>
        <begin position="111"/>
        <end position="114"/>
    </location>
    <ligand>
        <name>(6S)-5,6,7,8-tetrahydrofolate</name>
        <dbReference type="ChEBI" id="CHEBI:57453"/>
    </ligand>
</feature>
<organism>
    <name type="scientific">Chlorobium phaeobacteroides (strain BS1)</name>
    <dbReference type="NCBI Taxonomy" id="331678"/>
    <lineage>
        <taxon>Bacteria</taxon>
        <taxon>Pseudomonadati</taxon>
        <taxon>Chlorobiota</taxon>
        <taxon>Chlorobiia</taxon>
        <taxon>Chlorobiales</taxon>
        <taxon>Chlorobiaceae</taxon>
        <taxon>Chlorobium/Pelodictyon group</taxon>
        <taxon>Chlorobium</taxon>
    </lineage>
</organism>
<accession>B3EPG6</accession>
<protein>
    <recommendedName>
        <fullName evidence="1">Methionyl-tRNA formyltransferase</fullName>
        <ecNumber evidence="1">2.1.2.9</ecNumber>
    </recommendedName>
</protein>
<dbReference type="EC" id="2.1.2.9" evidence="1"/>
<dbReference type="EMBL" id="CP001101">
    <property type="protein sequence ID" value="ACE03844.1"/>
    <property type="molecule type" value="Genomic_DNA"/>
</dbReference>
<dbReference type="SMR" id="B3EPG6"/>
<dbReference type="STRING" id="331678.Cphamn1_0899"/>
<dbReference type="KEGG" id="cpb:Cphamn1_0899"/>
<dbReference type="eggNOG" id="COG0223">
    <property type="taxonomic scope" value="Bacteria"/>
</dbReference>
<dbReference type="HOGENOM" id="CLU_033347_1_1_10"/>
<dbReference type="OrthoDB" id="9802815at2"/>
<dbReference type="GO" id="GO:0005829">
    <property type="term" value="C:cytosol"/>
    <property type="evidence" value="ECO:0007669"/>
    <property type="project" value="TreeGrafter"/>
</dbReference>
<dbReference type="GO" id="GO:0004479">
    <property type="term" value="F:methionyl-tRNA formyltransferase activity"/>
    <property type="evidence" value="ECO:0007669"/>
    <property type="project" value="UniProtKB-UniRule"/>
</dbReference>
<dbReference type="CDD" id="cd08646">
    <property type="entry name" value="FMT_core_Met-tRNA-FMT_N"/>
    <property type="match status" value="1"/>
</dbReference>
<dbReference type="CDD" id="cd08704">
    <property type="entry name" value="Met_tRNA_FMT_C"/>
    <property type="match status" value="1"/>
</dbReference>
<dbReference type="Gene3D" id="3.40.50.12230">
    <property type="match status" value="1"/>
</dbReference>
<dbReference type="HAMAP" id="MF_00182">
    <property type="entry name" value="Formyl_trans"/>
    <property type="match status" value="1"/>
</dbReference>
<dbReference type="InterPro" id="IPR005794">
    <property type="entry name" value="Fmt"/>
</dbReference>
<dbReference type="InterPro" id="IPR005793">
    <property type="entry name" value="Formyl_trans_C"/>
</dbReference>
<dbReference type="InterPro" id="IPR002376">
    <property type="entry name" value="Formyl_transf_N"/>
</dbReference>
<dbReference type="InterPro" id="IPR036477">
    <property type="entry name" value="Formyl_transf_N_sf"/>
</dbReference>
<dbReference type="InterPro" id="IPR011034">
    <property type="entry name" value="Formyl_transferase-like_C_sf"/>
</dbReference>
<dbReference type="InterPro" id="IPR044135">
    <property type="entry name" value="Met-tRNA-FMT_C"/>
</dbReference>
<dbReference type="InterPro" id="IPR041711">
    <property type="entry name" value="Met-tRNA-FMT_N"/>
</dbReference>
<dbReference type="NCBIfam" id="TIGR00460">
    <property type="entry name" value="fmt"/>
    <property type="match status" value="1"/>
</dbReference>
<dbReference type="PANTHER" id="PTHR11138">
    <property type="entry name" value="METHIONYL-TRNA FORMYLTRANSFERASE"/>
    <property type="match status" value="1"/>
</dbReference>
<dbReference type="PANTHER" id="PTHR11138:SF5">
    <property type="entry name" value="METHIONYL-TRNA FORMYLTRANSFERASE, MITOCHONDRIAL"/>
    <property type="match status" value="1"/>
</dbReference>
<dbReference type="Pfam" id="PF02911">
    <property type="entry name" value="Formyl_trans_C"/>
    <property type="match status" value="1"/>
</dbReference>
<dbReference type="Pfam" id="PF00551">
    <property type="entry name" value="Formyl_trans_N"/>
    <property type="match status" value="1"/>
</dbReference>
<dbReference type="SUPFAM" id="SSF50486">
    <property type="entry name" value="FMT C-terminal domain-like"/>
    <property type="match status" value="1"/>
</dbReference>
<dbReference type="SUPFAM" id="SSF53328">
    <property type="entry name" value="Formyltransferase"/>
    <property type="match status" value="1"/>
</dbReference>
<name>FMT_CHLPB</name>
<gene>
    <name evidence="1" type="primary">fmt</name>
    <name type="ordered locus">Cphamn1_0899</name>
</gene>
<comment type="function">
    <text evidence="1">Attaches a formyl group to the free amino group of methionyl-tRNA(fMet). The formyl group appears to play a dual role in the initiator identity of N-formylmethionyl-tRNA by promoting its recognition by IF2 and preventing the misappropriation of this tRNA by the elongation apparatus.</text>
</comment>
<comment type="catalytic activity">
    <reaction evidence="1">
        <text>L-methionyl-tRNA(fMet) + (6R)-10-formyltetrahydrofolate = N-formyl-L-methionyl-tRNA(fMet) + (6S)-5,6,7,8-tetrahydrofolate + H(+)</text>
        <dbReference type="Rhea" id="RHEA:24380"/>
        <dbReference type="Rhea" id="RHEA-COMP:9952"/>
        <dbReference type="Rhea" id="RHEA-COMP:9953"/>
        <dbReference type="ChEBI" id="CHEBI:15378"/>
        <dbReference type="ChEBI" id="CHEBI:57453"/>
        <dbReference type="ChEBI" id="CHEBI:78530"/>
        <dbReference type="ChEBI" id="CHEBI:78844"/>
        <dbReference type="ChEBI" id="CHEBI:195366"/>
        <dbReference type="EC" id="2.1.2.9"/>
    </reaction>
</comment>
<comment type="similarity">
    <text evidence="1">Belongs to the Fmt family.</text>
</comment>
<sequence>MRVIFMGTPLFAVPSLRAVAEADNDVEIVLVVTGKDKPRRSQRAEPEPTPVKKAAKELGLAVLEIDDVKDARFADTIARYRPDVIVVAAFRILPPAVYELARLGSFNLHASLLPRYRGAAPVNWTIINGDRETGVTTFFLGRKVDTGNIILQQRTPVAPEETAGELTERLADIGAGVVLKTLKRIRDGEAEPTIQDDAMATRAPKLTSETTRIDWAEPVDAICDFVRGLSPKPSAWTVFNHRKVKIYRVAPGMFQLPEQDEQQKVPGALVVDGTRMFVMALDGWVEILSLQMEGKRKMGAADFCCGFRCEEECPSFS</sequence>
<evidence type="ECO:0000255" key="1">
    <source>
        <dbReference type="HAMAP-Rule" id="MF_00182"/>
    </source>
</evidence>
<keyword id="KW-0648">Protein biosynthesis</keyword>
<keyword id="KW-0808">Transferase</keyword>